<proteinExistence type="inferred from homology"/>
<evidence type="ECO:0000255" key="1">
    <source>
        <dbReference type="HAMAP-Rule" id="MF_00328"/>
    </source>
</evidence>
<gene>
    <name evidence="1" type="primary">gmk</name>
    <name type="ordered locus">ECP_3746</name>
</gene>
<protein>
    <recommendedName>
        <fullName evidence="1">Guanylate kinase</fullName>
        <ecNumber evidence="1">2.7.4.8</ecNumber>
    </recommendedName>
    <alternativeName>
        <fullName evidence="1">GMP kinase</fullName>
    </alternativeName>
</protein>
<name>KGUA_ECOL5</name>
<comment type="function">
    <text evidence="1">Essential for recycling GMP and indirectly, cGMP.</text>
</comment>
<comment type="catalytic activity">
    <reaction evidence="1">
        <text>GMP + ATP = GDP + ADP</text>
        <dbReference type="Rhea" id="RHEA:20780"/>
        <dbReference type="ChEBI" id="CHEBI:30616"/>
        <dbReference type="ChEBI" id="CHEBI:58115"/>
        <dbReference type="ChEBI" id="CHEBI:58189"/>
        <dbReference type="ChEBI" id="CHEBI:456216"/>
        <dbReference type="EC" id="2.7.4.8"/>
    </reaction>
</comment>
<comment type="subcellular location">
    <subcellularLocation>
        <location evidence="1">Cytoplasm</location>
    </subcellularLocation>
</comment>
<comment type="similarity">
    <text evidence="1">Belongs to the guanylate kinase family.</text>
</comment>
<accession>Q0TBG1</accession>
<organism>
    <name type="scientific">Escherichia coli O6:K15:H31 (strain 536 / UPEC)</name>
    <dbReference type="NCBI Taxonomy" id="362663"/>
    <lineage>
        <taxon>Bacteria</taxon>
        <taxon>Pseudomonadati</taxon>
        <taxon>Pseudomonadota</taxon>
        <taxon>Gammaproteobacteria</taxon>
        <taxon>Enterobacterales</taxon>
        <taxon>Enterobacteriaceae</taxon>
        <taxon>Escherichia</taxon>
    </lineage>
</organism>
<dbReference type="EC" id="2.7.4.8" evidence="1"/>
<dbReference type="EMBL" id="CP000247">
    <property type="protein sequence ID" value="ABG71718.1"/>
    <property type="molecule type" value="Genomic_DNA"/>
</dbReference>
<dbReference type="RefSeq" id="WP_001295237.1">
    <property type="nucleotide sequence ID" value="NC_008253.1"/>
</dbReference>
<dbReference type="SMR" id="Q0TBG1"/>
<dbReference type="GeneID" id="93778363"/>
<dbReference type="KEGG" id="ecp:ECP_3746"/>
<dbReference type="HOGENOM" id="CLU_001715_1_0_6"/>
<dbReference type="Proteomes" id="UP000009182">
    <property type="component" value="Chromosome"/>
</dbReference>
<dbReference type="GO" id="GO:0005829">
    <property type="term" value="C:cytosol"/>
    <property type="evidence" value="ECO:0007669"/>
    <property type="project" value="TreeGrafter"/>
</dbReference>
<dbReference type="GO" id="GO:0005524">
    <property type="term" value="F:ATP binding"/>
    <property type="evidence" value="ECO:0007669"/>
    <property type="project" value="UniProtKB-UniRule"/>
</dbReference>
<dbReference type="GO" id="GO:0004385">
    <property type="term" value="F:guanylate kinase activity"/>
    <property type="evidence" value="ECO:0007669"/>
    <property type="project" value="UniProtKB-UniRule"/>
</dbReference>
<dbReference type="CDD" id="cd00071">
    <property type="entry name" value="GMPK"/>
    <property type="match status" value="1"/>
</dbReference>
<dbReference type="FunFam" id="3.40.50.300:FF:000084">
    <property type="entry name" value="Guanylate kinase"/>
    <property type="match status" value="1"/>
</dbReference>
<dbReference type="FunFam" id="3.30.63.10:FF:000002">
    <property type="entry name" value="Guanylate kinase 1"/>
    <property type="match status" value="1"/>
</dbReference>
<dbReference type="Gene3D" id="3.30.63.10">
    <property type="entry name" value="Guanylate Kinase phosphate binding domain"/>
    <property type="match status" value="1"/>
</dbReference>
<dbReference type="Gene3D" id="3.40.50.300">
    <property type="entry name" value="P-loop containing nucleotide triphosphate hydrolases"/>
    <property type="match status" value="1"/>
</dbReference>
<dbReference type="HAMAP" id="MF_00328">
    <property type="entry name" value="Guanylate_kinase"/>
    <property type="match status" value="1"/>
</dbReference>
<dbReference type="InterPro" id="IPR008145">
    <property type="entry name" value="GK/Ca_channel_bsu"/>
</dbReference>
<dbReference type="InterPro" id="IPR008144">
    <property type="entry name" value="Guanylate_kin-like_dom"/>
</dbReference>
<dbReference type="InterPro" id="IPR017665">
    <property type="entry name" value="Guanylate_kinase"/>
</dbReference>
<dbReference type="InterPro" id="IPR020590">
    <property type="entry name" value="Guanylate_kinase_CS"/>
</dbReference>
<dbReference type="InterPro" id="IPR027417">
    <property type="entry name" value="P-loop_NTPase"/>
</dbReference>
<dbReference type="NCBIfam" id="TIGR03263">
    <property type="entry name" value="guanyl_kin"/>
    <property type="match status" value="1"/>
</dbReference>
<dbReference type="PANTHER" id="PTHR23117:SF13">
    <property type="entry name" value="GUANYLATE KINASE"/>
    <property type="match status" value="1"/>
</dbReference>
<dbReference type="PANTHER" id="PTHR23117">
    <property type="entry name" value="GUANYLATE KINASE-RELATED"/>
    <property type="match status" value="1"/>
</dbReference>
<dbReference type="Pfam" id="PF00625">
    <property type="entry name" value="Guanylate_kin"/>
    <property type="match status" value="1"/>
</dbReference>
<dbReference type="SMART" id="SM00072">
    <property type="entry name" value="GuKc"/>
    <property type="match status" value="1"/>
</dbReference>
<dbReference type="SUPFAM" id="SSF52540">
    <property type="entry name" value="P-loop containing nucleoside triphosphate hydrolases"/>
    <property type="match status" value="1"/>
</dbReference>
<dbReference type="PROSITE" id="PS00856">
    <property type="entry name" value="GUANYLATE_KINASE_1"/>
    <property type="match status" value="1"/>
</dbReference>
<dbReference type="PROSITE" id="PS50052">
    <property type="entry name" value="GUANYLATE_KINASE_2"/>
    <property type="match status" value="1"/>
</dbReference>
<keyword id="KW-0067">ATP-binding</keyword>
<keyword id="KW-0963">Cytoplasm</keyword>
<keyword id="KW-0418">Kinase</keyword>
<keyword id="KW-0547">Nucleotide-binding</keyword>
<keyword id="KW-0808">Transferase</keyword>
<reference key="1">
    <citation type="journal article" date="2006" name="Mol. Microbiol.">
        <title>Role of pathogenicity island-associated integrases in the genome plasticity of uropathogenic Escherichia coli strain 536.</title>
        <authorList>
            <person name="Hochhut B."/>
            <person name="Wilde C."/>
            <person name="Balling G."/>
            <person name="Middendorf B."/>
            <person name="Dobrindt U."/>
            <person name="Brzuszkiewicz E."/>
            <person name="Gottschalk G."/>
            <person name="Carniel E."/>
            <person name="Hacker J."/>
        </authorList>
    </citation>
    <scope>NUCLEOTIDE SEQUENCE [LARGE SCALE GENOMIC DNA]</scope>
    <source>
        <strain>536 / UPEC</strain>
    </source>
</reference>
<feature type="chain" id="PRO_0000266324" description="Guanylate kinase">
    <location>
        <begin position="1"/>
        <end position="207"/>
    </location>
</feature>
<feature type="domain" description="Guanylate kinase-like" evidence="1">
    <location>
        <begin position="4"/>
        <end position="184"/>
    </location>
</feature>
<feature type="binding site" evidence="1">
    <location>
        <begin position="11"/>
        <end position="18"/>
    </location>
    <ligand>
        <name>ATP</name>
        <dbReference type="ChEBI" id="CHEBI:30616"/>
    </ligand>
</feature>
<sequence length="207" mass="23593">MAQGTLYIVSAPSGAGKSSLIQALLKTQPLYDTQVSVSHTTRQPRPGEVHGEHYFFVNHDEFKEMISRDAFLEHAEVFGNYYGTSREAIEQVLATGVDVFLDIDWQGAQQIRQKMPHARSIFILPPSKIELDRRLRGRGQDSEEVIAKRMAQAVAEMSHYAEYDYLIVNDDFDTALTDLKTIIRAERLRMSRQKQRHDALISKLLAD</sequence>